<organism>
    <name type="scientific">Clostridium botulinum (strain Eklund 17B / Type B)</name>
    <dbReference type="NCBI Taxonomy" id="935198"/>
    <lineage>
        <taxon>Bacteria</taxon>
        <taxon>Bacillati</taxon>
        <taxon>Bacillota</taxon>
        <taxon>Clostridia</taxon>
        <taxon>Eubacteriales</taxon>
        <taxon>Clostridiaceae</taxon>
        <taxon>Clostridium</taxon>
    </lineage>
</organism>
<gene>
    <name evidence="1" type="primary">rlmH</name>
    <name type="ordered locus">CLL_A3548</name>
</gene>
<comment type="function">
    <text evidence="1">Specifically methylates the pseudouridine at position 1915 (m3Psi1915) in 23S rRNA.</text>
</comment>
<comment type="catalytic activity">
    <reaction evidence="1">
        <text>pseudouridine(1915) in 23S rRNA + S-adenosyl-L-methionine = N(3)-methylpseudouridine(1915) in 23S rRNA + S-adenosyl-L-homocysteine + H(+)</text>
        <dbReference type="Rhea" id="RHEA:42752"/>
        <dbReference type="Rhea" id="RHEA-COMP:10221"/>
        <dbReference type="Rhea" id="RHEA-COMP:10222"/>
        <dbReference type="ChEBI" id="CHEBI:15378"/>
        <dbReference type="ChEBI" id="CHEBI:57856"/>
        <dbReference type="ChEBI" id="CHEBI:59789"/>
        <dbReference type="ChEBI" id="CHEBI:65314"/>
        <dbReference type="ChEBI" id="CHEBI:74486"/>
        <dbReference type="EC" id="2.1.1.177"/>
    </reaction>
</comment>
<comment type="subunit">
    <text evidence="1">Homodimer.</text>
</comment>
<comment type="subcellular location">
    <subcellularLocation>
        <location evidence="1">Cytoplasm</location>
    </subcellularLocation>
</comment>
<comment type="similarity">
    <text evidence="1">Belongs to the RNA methyltransferase RlmH family.</text>
</comment>
<feature type="chain" id="PRO_0000366580" description="Ribosomal RNA large subunit methyltransferase H">
    <location>
        <begin position="1"/>
        <end position="159"/>
    </location>
</feature>
<feature type="binding site" evidence="1">
    <location>
        <position position="76"/>
    </location>
    <ligand>
        <name>S-adenosyl-L-methionine</name>
        <dbReference type="ChEBI" id="CHEBI:59789"/>
    </ligand>
</feature>
<feature type="binding site" evidence="1">
    <location>
        <position position="108"/>
    </location>
    <ligand>
        <name>S-adenosyl-L-methionine</name>
        <dbReference type="ChEBI" id="CHEBI:59789"/>
    </ligand>
</feature>
<feature type="binding site" evidence="1">
    <location>
        <begin position="127"/>
        <end position="132"/>
    </location>
    <ligand>
        <name>S-adenosyl-L-methionine</name>
        <dbReference type="ChEBI" id="CHEBI:59789"/>
    </ligand>
</feature>
<reference key="1">
    <citation type="submission" date="2008-04" db="EMBL/GenBank/DDBJ databases">
        <title>Complete sequence of Clostridium botulinum strain Eklund.</title>
        <authorList>
            <person name="Brinkac L.M."/>
            <person name="Brown J.L."/>
            <person name="Bruce D."/>
            <person name="Detter C."/>
            <person name="Munk C."/>
            <person name="Smith L.A."/>
            <person name="Smith T.J."/>
            <person name="Sutton G."/>
            <person name="Brettin T.S."/>
        </authorList>
    </citation>
    <scope>NUCLEOTIDE SEQUENCE [LARGE SCALE GENOMIC DNA]</scope>
    <source>
        <strain>Eklund 17B / Type B</strain>
    </source>
</reference>
<sequence>MNITIISVGKLKEKYLKHAIDEYSKRLSRYCKLNILELQDEQTPDNASEKDELIIKDKEGNKILNSIKDNMYVITLDLKGKMMSSEELSKFIDNCGVRGNSNLCFVIGGSLGLSEAVLKRSNHSLCFSKMTFPHQLFRVMLLEQIYRAFRISNGEPYHK</sequence>
<evidence type="ECO:0000255" key="1">
    <source>
        <dbReference type="HAMAP-Rule" id="MF_00658"/>
    </source>
</evidence>
<proteinExistence type="inferred from homology"/>
<name>RLMH_CLOBB</name>
<keyword id="KW-0963">Cytoplasm</keyword>
<keyword id="KW-0489">Methyltransferase</keyword>
<keyword id="KW-0698">rRNA processing</keyword>
<keyword id="KW-0949">S-adenosyl-L-methionine</keyword>
<keyword id="KW-0808">Transferase</keyword>
<dbReference type="EC" id="2.1.1.177" evidence="1"/>
<dbReference type="EMBL" id="CP001056">
    <property type="protein sequence ID" value="ACD24469.1"/>
    <property type="molecule type" value="Genomic_DNA"/>
</dbReference>
<dbReference type="SMR" id="B2TRC7"/>
<dbReference type="KEGG" id="cbk:CLL_A3548"/>
<dbReference type="PATRIC" id="fig|935198.13.peg.3481"/>
<dbReference type="HOGENOM" id="CLU_100552_0_0_9"/>
<dbReference type="Proteomes" id="UP000001195">
    <property type="component" value="Chromosome"/>
</dbReference>
<dbReference type="GO" id="GO:0005737">
    <property type="term" value="C:cytoplasm"/>
    <property type="evidence" value="ECO:0007669"/>
    <property type="project" value="UniProtKB-SubCell"/>
</dbReference>
<dbReference type="GO" id="GO:0070038">
    <property type="term" value="F:rRNA (pseudouridine-N3-)-methyltransferase activity"/>
    <property type="evidence" value="ECO:0007669"/>
    <property type="project" value="UniProtKB-UniRule"/>
</dbReference>
<dbReference type="CDD" id="cd18081">
    <property type="entry name" value="RlmH-like"/>
    <property type="match status" value="1"/>
</dbReference>
<dbReference type="Gene3D" id="3.40.1280.10">
    <property type="match status" value="1"/>
</dbReference>
<dbReference type="HAMAP" id="MF_00658">
    <property type="entry name" value="23SrRNA_methyltr_H"/>
    <property type="match status" value="1"/>
</dbReference>
<dbReference type="InterPro" id="IPR029028">
    <property type="entry name" value="Alpha/beta_knot_MTases"/>
</dbReference>
<dbReference type="InterPro" id="IPR003742">
    <property type="entry name" value="RlmH-like"/>
</dbReference>
<dbReference type="InterPro" id="IPR029026">
    <property type="entry name" value="tRNA_m1G_MTases_N"/>
</dbReference>
<dbReference type="NCBIfam" id="NF000985">
    <property type="entry name" value="PRK00103.1-3"/>
    <property type="match status" value="1"/>
</dbReference>
<dbReference type="NCBIfam" id="TIGR00246">
    <property type="entry name" value="tRNA_RlmH_YbeA"/>
    <property type="match status" value="1"/>
</dbReference>
<dbReference type="PANTHER" id="PTHR33603">
    <property type="entry name" value="METHYLTRANSFERASE"/>
    <property type="match status" value="1"/>
</dbReference>
<dbReference type="PANTHER" id="PTHR33603:SF1">
    <property type="entry name" value="RIBOSOMAL RNA LARGE SUBUNIT METHYLTRANSFERASE H"/>
    <property type="match status" value="1"/>
</dbReference>
<dbReference type="Pfam" id="PF02590">
    <property type="entry name" value="SPOUT_MTase"/>
    <property type="match status" value="1"/>
</dbReference>
<dbReference type="PIRSF" id="PIRSF004505">
    <property type="entry name" value="MT_bac"/>
    <property type="match status" value="1"/>
</dbReference>
<dbReference type="SUPFAM" id="SSF75217">
    <property type="entry name" value="alpha/beta knot"/>
    <property type="match status" value="1"/>
</dbReference>
<accession>B2TRC7</accession>
<protein>
    <recommendedName>
        <fullName evidence="1">Ribosomal RNA large subunit methyltransferase H</fullName>
        <ecNumber evidence="1">2.1.1.177</ecNumber>
    </recommendedName>
    <alternativeName>
        <fullName evidence="1">23S rRNA (pseudouridine1915-N3)-methyltransferase</fullName>
    </alternativeName>
    <alternativeName>
        <fullName evidence="1">23S rRNA m3Psi1915 methyltransferase</fullName>
    </alternativeName>
    <alternativeName>
        <fullName evidence="1">rRNA (pseudouridine-N3-)-methyltransferase RlmH</fullName>
    </alternativeName>
</protein>